<keyword id="KW-1185">Reference proteome</keyword>
<feature type="chain" id="PRO_0000089532" description="Uncharacterized protein C6orf136 homolog">
    <location>
        <begin position="1"/>
        <end position="172"/>
    </location>
</feature>
<reference key="1">
    <citation type="journal article" date="2004" name="Mol. Biol. Evol.">
        <title>Rhesus macaque class I duplicon structures, organization, and evolution within the alpha block of the major histocompatibility complex.</title>
        <authorList>
            <person name="Kulski J.K."/>
            <person name="Anzai T."/>
            <person name="Shiina T."/>
            <person name="Inoko H."/>
        </authorList>
    </citation>
    <scope>NUCLEOTIDE SEQUENCE [LARGE SCALE GENOMIC DNA]</scope>
</reference>
<accession>Q5TM64</accession>
<dbReference type="EMBL" id="AB128049">
    <property type="protein sequence ID" value="BAD69762.1"/>
    <property type="molecule type" value="Genomic_DNA"/>
</dbReference>
<dbReference type="RefSeq" id="NP_001098633.1">
    <property type="nucleotide sequence ID" value="NM_001105163.1"/>
</dbReference>
<dbReference type="FunCoup" id="Q5TM64">
    <property type="interactions" value="19"/>
</dbReference>
<dbReference type="STRING" id="9544.ENSMMUP00000026246"/>
<dbReference type="PaxDb" id="9544-ENSMMUP00000034161"/>
<dbReference type="GeneID" id="712108"/>
<dbReference type="KEGG" id="mcc:712108"/>
<dbReference type="CTD" id="100916918"/>
<dbReference type="eggNOG" id="KOG4457">
    <property type="taxonomic scope" value="Eukaryota"/>
</dbReference>
<dbReference type="InParanoid" id="Q5TM64"/>
<dbReference type="OrthoDB" id="44820at2759"/>
<dbReference type="Proteomes" id="UP000006718">
    <property type="component" value="Unassembled WGS sequence"/>
</dbReference>
<dbReference type="InterPro" id="IPR018790">
    <property type="entry name" value="DUF2358"/>
</dbReference>
<dbReference type="PANTHER" id="PTHR31094">
    <property type="entry name" value="RIKEN CDNA 2310061I04 GENE"/>
    <property type="match status" value="1"/>
</dbReference>
<dbReference type="PANTHER" id="PTHR31094:SF2">
    <property type="entry name" value="RIKEN CDNA 2310061I04 GENE"/>
    <property type="match status" value="1"/>
</dbReference>
<dbReference type="Pfam" id="PF10184">
    <property type="entry name" value="DUF2358"/>
    <property type="match status" value="1"/>
</dbReference>
<name>CF136_MACMU</name>
<proteinExistence type="predicted"/>
<protein>
    <recommendedName>
        <fullName>Uncharacterized protein C6orf136 homolog</fullName>
    </recommendedName>
</protein>
<sequence length="172" mass="20472">MEEHLSVMYERLRQELPKLFLQSHDYSLYSLDVEFINEILNIRTKGRTWYILSLTLCRFLAWNYFSQLRLEVLQLTRHPENWTLQARWRLVGLPVHLLFLRFYKRDKDELYRTYDAYSTFYLNSSGLICRHRLDKLMPSHSPPTPVKKLLVGALVALGLSEPEPNLNLCSKP</sequence>
<organism>
    <name type="scientific">Macaca mulatta</name>
    <name type="common">Rhesus macaque</name>
    <dbReference type="NCBI Taxonomy" id="9544"/>
    <lineage>
        <taxon>Eukaryota</taxon>
        <taxon>Metazoa</taxon>
        <taxon>Chordata</taxon>
        <taxon>Craniata</taxon>
        <taxon>Vertebrata</taxon>
        <taxon>Euteleostomi</taxon>
        <taxon>Mammalia</taxon>
        <taxon>Eutheria</taxon>
        <taxon>Euarchontoglires</taxon>
        <taxon>Primates</taxon>
        <taxon>Haplorrhini</taxon>
        <taxon>Catarrhini</taxon>
        <taxon>Cercopithecidae</taxon>
        <taxon>Cercopithecinae</taxon>
        <taxon>Macaca</taxon>
    </lineage>
</organism>